<keyword id="KW-0255">Endonuclease</keyword>
<keyword id="KW-0378">Hydrolase</keyword>
<keyword id="KW-0540">Nuclease</keyword>
<keyword id="KW-0694">RNA-binding</keyword>
<keyword id="KW-0819">tRNA processing</keyword>
<protein>
    <recommendedName>
        <fullName evidence="1">Ribonuclease P protein component</fullName>
        <shortName evidence="1">RNase P protein</shortName>
        <shortName evidence="1">RNaseP protein</shortName>
        <ecNumber evidence="1">3.1.26.5</ecNumber>
    </recommendedName>
    <alternativeName>
        <fullName evidence="1">Protein C5</fullName>
    </alternativeName>
</protein>
<accession>C1CTU8</accession>
<sequence length="123" mass="14281">MKKNFRVKREKDFKAIFKEGTSFANRKFVVYQLENQKNHFRVGLSVSKKLGNAVTRNQIKRRIRHIIQNAKGSLVEDVDFVVIARKGVETLGYAEMEKNLLHVLKLSKIYREGNGSEKETKVD</sequence>
<evidence type="ECO:0000255" key="1">
    <source>
        <dbReference type="HAMAP-Rule" id="MF_00227"/>
    </source>
</evidence>
<comment type="function">
    <text evidence="1">RNaseP catalyzes the removal of the 5'-leader sequence from pre-tRNA to produce the mature 5'-terminus. It can also cleave other RNA substrates such as 4.5S RNA. The protein component plays an auxiliary but essential role in vivo by binding to the 5'-leader sequence and broadening the substrate specificity of the ribozyme.</text>
</comment>
<comment type="catalytic activity">
    <reaction evidence="1">
        <text>Endonucleolytic cleavage of RNA, removing 5'-extranucleotides from tRNA precursor.</text>
        <dbReference type="EC" id="3.1.26.5"/>
    </reaction>
</comment>
<comment type="subunit">
    <text evidence="1">Consists of a catalytic RNA component (M1 or rnpB) and a protein subunit.</text>
</comment>
<comment type="similarity">
    <text evidence="1">Belongs to the RnpA family.</text>
</comment>
<name>RNPA_STRZT</name>
<organism>
    <name type="scientific">Streptococcus pneumoniae (strain Taiwan19F-14)</name>
    <dbReference type="NCBI Taxonomy" id="487213"/>
    <lineage>
        <taxon>Bacteria</taxon>
        <taxon>Bacillati</taxon>
        <taxon>Bacillota</taxon>
        <taxon>Bacilli</taxon>
        <taxon>Lactobacillales</taxon>
        <taxon>Streptococcaceae</taxon>
        <taxon>Streptococcus</taxon>
    </lineage>
</organism>
<feature type="chain" id="PRO_1000194678" description="Ribonuclease P protein component">
    <location>
        <begin position="1"/>
        <end position="123"/>
    </location>
</feature>
<dbReference type="EC" id="3.1.26.5" evidence="1"/>
<dbReference type="EMBL" id="CP000921">
    <property type="protein sequence ID" value="ACO22962.1"/>
    <property type="molecule type" value="Genomic_DNA"/>
</dbReference>
<dbReference type="RefSeq" id="WP_000739246.1">
    <property type="nucleotide sequence ID" value="NC_012469.1"/>
</dbReference>
<dbReference type="SMR" id="C1CTU8"/>
<dbReference type="GeneID" id="45652735"/>
<dbReference type="KEGG" id="snt:SPT_2037"/>
<dbReference type="HOGENOM" id="CLU_117179_9_1_9"/>
<dbReference type="GO" id="GO:0030677">
    <property type="term" value="C:ribonuclease P complex"/>
    <property type="evidence" value="ECO:0007669"/>
    <property type="project" value="TreeGrafter"/>
</dbReference>
<dbReference type="GO" id="GO:0042781">
    <property type="term" value="F:3'-tRNA processing endoribonuclease activity"/>
    <property type="evidence" value="ECO:0007669"/>
    <property type="project" value="TreeGrafter"/>
</dbReference>
<dbReference type="GO" id="GO:0004526">
    <property type="term" value="F:ribonuclease P activity"/>
    <property type="evidence" value="ECO:0007669"/>
    <property type="project" value="UniProtKB-UniRule"/>
</dbReference>
<dbReference type="GO" id="GO:0000049">
    <property type="term" value="F:tRNA binding"/>
    <property type="evidence" value="ECO:0007669"/>
    <property type="project" value="UniProtKB-UniRule"/>
</dbReference>
<dbReference type="GO" id="GO:0001682">
    <property type="term" value="P:tRNA 5'-leader removal"/>
    <property type="evidence" value="ECO:0007669"/>
    <property type="project" value="UniProtKB-UniRule"/>
</dbReference>
<dbReference type="FunFam" id="3.30.230.10:FF:000021">
    <property type="entry name" value="Ribonuclease P protein component"/>
    <property type="match status" value="1"/>
</dbReference>
<dbReference type="Gene3D" id="3.30.230.10">
    <property type="match status" value="1"/>
</dbReference>
<dbReference type="HAMAP" id="MF_00227">
    <property type="entry name" value="RNase_P"/>
    <property type="match status" value="1"/>
</dbReference>
<dbReference type="InterPro" id="IPR020568">
    <property type="entry name" value="Ribosomal_Su5_D2-typ_SF"/>
</dbReference>
<dbReference type="InterPro" id="IPR014721">
    <property type="entry name" value="Ribsml_uS5_D2-typ_fold_subgr"/>
</dbReference>
<dbReference type="InterPro" id="IPR000100">
    <property type="entry name" value="RNase_P"/>
</dbReference>
<dbReference type="InterPro" id="IPR020539">
    <property type="entry name" value="RNase_P_CS"/>
</dbReference>
<dbReference type="NCBIfam" id="TIGR00188">
    <property type="entry name" value="rnpA"/>
    <property type="match status" value="1"/>
</dbReference>
<dbReference type="PANTHER" id="PTHR33992">
    <property type="entry name" value="RIBONUCLEASE P PROTEIN COMPONENT"/>
    <property type="match status" value="1"/>
</dbReference>
<dbReference type="PANTHER" id="PTHR33992:SF1">
    <property type="entry name" value="RIBONUCLEASE P PROTEIN COMPONENT"/>
    <property type="match status" value="1"/>
</dbReference>
<dbReference type="Pfam" id="PF00825">
    <property type="entry name" value="Ribonuclease_P"/>
    <property type="match status" value="1"/>
</dbReference>
<dbReference type="SUPFAM" id="SSF54211">
    <property type="entry name" value="Ribosomal protein S5 domain 2-like"/>
    <property type="match status" value="1"/>
</dbReference>
<dbReference type="PROSITE" id="PS00648">
    <property type="entry name" value="RIBONUCLEASE_P"/>
    <property type="match status" value="1"/>
</dbReference>
<gene>
    <name evidence="1" type="primary">rnpA</name>
    <name type="ordered locus">SPT_2037</name>
</gene>
<reference key="1">
    <citation type="journal article" date="2010" name="Genome Biol.">
        <title>Structure and dynamics of the pan-genome of Streptococcus pneumoniae and closely related species.</title>
        <authorList>
            <person name="Donati C."/>
            <person name="Hiller N.L."/>
            <person name="Tettelin H."/>
            <person name="Muzzi A."/>
            <person name="Croucher N.J."/>
            <person name="Angiuoli S.V."/>
            <person name="Oggioni M."/>
            <person name="Dunning Hotopp J.C."/>
            <person name="Hu F.Z."/>
            <person name="Riley D.R."/>
            <person name="Covacci A."/>
            <person name="Mitchell T.J."/>
            <person name="Bentley S.D."/>
            <person name="Kilian M."/>
            <person name="Ehrlich G.D."/>
            <person name="Rappuoli R."/>
            <person name="Moxon E.R."/>
            <person name="Masignani V."/>
        </authorList>
    </citation>
    <scope>NUCLEOTIDE SEQUENCE [LARGE SCALE GENOMIC DNA]</scope>
    <source>
        <strain>Taiwan19F-14</strain>
    </source>
</reference>
<proteinExistence type="inferred from homology"/>